<name>R20K_CLOPA</name>
<reference key="1">
    <citation type="journal article" date="1992" name="Biochem. J.">
        <title>Cloning, sequencing and expression in Escherichia coli of the rubredoxin gene from Clostridium pasteurianum.</title>
        <authorList>
            <person name="Mathieu I."/>
            <person name="Meyer J."/>
            <person name="Moulis J.-M."/>
        </authorList>
    </citation>
    <scope>NUCLEOTIDE SEQUENCE [GENOMIC DNA]</scope>
    <source>
        <strain>ATCC 6013 / DSM 525 / NCIB 9486 / VKM B-1774 / W5</strain>
    </source>
</reference>
<dbReference type="EC" id="1.11.1.-"/>
<dbReference type="EMBL" id="M60116">
    <property type="protein sequence ID" value="AAA23278.1"/>
    <property type="molecule type" value="Genomic_DNA"/>
</dbReference>
<dbReference type="PIR" id="S29119">
    <property type="entry name" value="S29119"/>
</dbReference>
<dbReference type="RefSeq" id="WP_003447686.1">
    <property type="nucleotide sequence ID" value="NZ_LFYL01000002.1"/>
</dbReference>
<dbReference type="SMR" id="P23161"/>
<dbReference type="GeneID" id="93075894"/>
<dbReference type="OrthoDB" id="9812811at2"/>
<dbReference type="GO" id="GO:0005829">
    <property type="term" value="C:cytosol"/>
    <property type="evidence" value="ECO:0007669"/>
    <property type="project" value="TreeGrafter"/>
</dbReference>
<dbReference type="GO" id="GO:0008379">
    <property type="term" value="F:thioredoxin peroxidase activity"/>
    <property type="evidence" value="ECO:0007669"/>
    <property type="project" value="TreeGrafter"/>
</dbReference>
<dbReference type="GO" id="GO:0045454">
    <property type="term" value="P:cell redox homeostasis"/>
    <property type="evidence" value="ECO:0007669"/>
    <property type="project" value="TreeGrafter"/>
</dbReference>
<dbReference type="GO" id="GO:0033554">
    <property type="term" value="P:cellular response to stress"/>
    <property type="evidence" value="ECO:0007669"/>
    <property type="project" value="TreeGrafter"/>
</dbReference>
<dbReference type="GO" id="GO:0042744">
    <property type="term" value="P:hydrogen peroxide catabolic process"/>
    <property type="evidence" value="ECO:0007669"/>
    <property type="project" value="TreeGrafter"/>
</dbReference>
<dbReference type="GO" id="GO:0006979">
    <property type="term" value="P:response to oxidative stress"/>
    <property type="evidence" value="ECO:0007669"/>
    <property type="project" value="TreeGrafter"/>
</dbReference>
<dbReference type="CDD" id="cd03015">
    <property type="entry name" value="PRX_Typ2cys"/>
    <property type="match status" value="1"/>
</dbReference>
<dbReference type="FunFam" id="3.40.30.10:FF:000002">
    <property type="entry name" value="Alkyl hydroperoxide reductase C"/>
    <property type="match status" value="1"/>
</dbReference>
<dbReference type="Gene3D" id="3.40.30.10">
    <property type="entry name" value="Glutaredoxin"/>
    <property type="match status" value="1"/>
</dbReference>
<dbReference type="InterPro" id="IPR000866">
    <property type="entry name" value="AhpC/TSA"/>
</dbReference>
<dbReference type="InterPro" id="IPR050217">
    <property type="entry name" value="Peroxiredoxin"/>
</dbReference>
<dbReference type="InterPro" id="IPR024706">
    <property type="entry name" value="Peroxiredoxin_AhpC-typ"/>
</dbReference>
<dbReference type="InterPro" id="IPR036249">
    <property type="entry name" value="Thioredoxin-like_sf"/>
</dbReference>
<dbReference type="InterPro" id="IPR013766">
    <property type="entry name" value="Thioredoxin_domain"/>
</dbReference>
<dbReference type="PANTHER" id="PTHR10681">
    <property type="entry name" value="THIOREDOXIN PEROXIDASE"/>
    <property type="match status" value="1"/>
</dbReference>
<dbReference type="PANTHER" id="PTHR10681:SF128">
    <property type="entry name" value="THIOREDOXIN-DEPENDENT PEROXIDE REDUCTASE, MITOCHONDRIAL"/>
    <property type="match status" value="1"/>
</dbReference>
<dbReference type="Pfam" id="PF00578">
    <property type="entry name" value="AhpC-TSA"/>
    <property type="match status" value="1"/>
</dbReference>
<dbReference type="PIRSF" id="PIRSF000239">
    <property type="entry name" value="AHPC"/>
    <property type="match status" value="1"/>
</dbReference>
<dbReference type="SUPFAM" id="SSF52833">
    <property type="entry name" value="Thioredoxin-like"/>
    <property type="match status" value="1"/>
</dbReference>
<dbReference type="PROSITE" id="PS51352">
    <property type="entry name" value="THIOREDOXIN_2"/>
    <property type="match status" value="1"/>
</dbReference>
<evidence type="ECO:0000250" key="1">
    <source>
        <dbReference type="UniProtKB" id="P0A251"/>
    </source>
</evidence>
<evidence type="ECO:0000250" key="2">
    <source>
        <dbReference type="UniProtKB" id="P0AE08"/>
    </source>
</evidence>
<evidence type="ECO:0000255" key="3">
    <source>
        <dbReference type="PROSITE-ProRule" id="PRU00691"/>
    </source>
</evidence>
<evidence type="ECO:0000305" key="4"/>
<organism>
    <name type="scientific">Clostridium pasteurianum</name>
    <dbReference type="NCBI Taxonomy" id="1501"/>
    <lineage>
        <taxon>Bacteria</taxon>
        <taxon>Bacillati</taxon>
        <taxon>Bacillota</taxon>
        <taxon>Clostridia</taxon>
        <taxon>Eubacteriales</taxon>
        <taxon>Clostridiaceae</taxon>
        <taxon>Clostridium</taxon>
    </lineage>
</organism>
<accession>P23161</accession>
<sequence length="178" mass="20036">MERLVGKPAPEFEMKAVKGDGRGFTEVKLGDYKGKWLVMFFYPLDFTFVCPTEITGFSKRAEEFRDLKAELLAVSCDSQYSHETWINQDIKQGGLGKINFPIASDKTTEVSTKYGIQIEEEGISLRGLFIIDPEGIVRYSVVHDLNVGRSVDETLRVLKAFQTGGMCALDWHEGDDNL</sequence>
<protein>
    <recommendedName>
        <fullName>Putative peroxiredoxin in rubredoxin operon</fullName>
        <ecNumber>1.11.1.-</ecNumber>
    </recommendedName>
    <alternativeName>
        <fullName>ORF C</fullName>
    </alternativeName>
</protein>
<proteinExistence type="inferred from homology"/>
<feature type="chain" id="PRO_0000135131" description="Putative peroxiredoxin in rubredoxin operon">
    <location>
        <begin position="1"/>
        <end position="178"/>
    </location>
</feature>
<feature type="domain" description="Thioredoxin" evidence="3">
    <location>
        <begin position="3"/>
        <end position="163"/>
    </location>
</feature>
<feature type="active site" description="Cysteine sulfenic acid (-SOH) intermediate" evidence="1">
    <location>
        <position position="50"/>
    </location>
</feature>
<feature type="disulfide bond" description="Interchain (with C-167); in linked form" evidence="1">
    <location>
        <position position="50"/>
    </location>
</feature>
<feature type="disulfide bond" description="Interchain (with C-50); in linked form" evidence="1">
    <location>
        <position position="167"/>
    </location>
</feature>
<comment type="function">
    <text evidence="1">Thiol-specific peroxidase that catalyzes the reduction of hydrogen peroxide and organic hydroperoxides to water and alcohols, respectively. Plays a role in cell protection against oxidative stress by detoxifying peroxides.</text>
</comment>
<comment type="catalytic activity">
    <reaction>
        <text>a hydroperoxide + [protein]-dithiol = [protein]-disulfide + an alcohol + H2O</text>
        <dbReference type="Rhea" id="RHEA:10008"/>
        <dbReference type="Rhea" id="RHEA-COMP:10593"/>
        <dbReference type="Rhea" id="RHEA-COMP:10594"/>
        <dbReference type="ChEBI" id="CHEBI:15377"/>
        <dbReference type="ChEBI" id="CHEBI:29950"/>
        <dbReference type="ChEBI" id="CHEBI:30879"/>
        <dbReference type="ChEBI" id="CHEBI:35924"/>
        <dbReference type="ChEBI" id="CHEBI:50058"/>
    </reaction>
</comment>
<comment type="subunit">
    <text evidence="1">Homodimer; disulfide-linked, upon oxidation.</text>
</comment>
<comment type="subcellular location">
    <subcellularLocation>
        <location evidence="2">Cytoplasm</location>
    </subcellularLocation>
</comment>
<comment type="miscellaneous">
    <text evidence="1">The active site is a conserved redox-active cysteine residue, the peroxidatic cysteine (C(P)), which makes the nucleophilic attack on the peroxide substrate. The peroxide oxidizes the C(P)-SH to cysteine sulfenic acid (C(P)-SOH), which then reacts with another cysteine residue, the resolving cysteine (C(R)), to form a disulfide bridge. The disulfide is subsequently reduced by an appropriate electron donor to complete the catalytic cycle. In this typical 2-Cys peroxiredoxin, C(R) is provided by the other dimeric subunit to form an intersubunit disulfide.</text>
</comment>
<comment type="similarity">
    <text evidence="4">Belongs to the peroxiredoxin family. AhpC/Prx1 subfamily.</text>
</comment>
<keyword id="KW-0963">Cytoplasm</keyword>
<keyword id="KW-1015">Disulfide bond</keyword>
<keyword id="KW-0560">Oxidoreductase</keyword>
<keyword id="KW-0575">Peroxidase</keyword>
<keyword id="KW-0676">Redox-active center</keyword>